<feature type="transit peptide" description="Mitochondrion" evidence="4">
    <location>
        <begin position="1"/>
        <end status="unknown"/>
    </location>
</feature>
<feature type="chain" id="PRO_0000328522" description="Probable cysteine--tRNA ligase, mitochondrial">
    <location>
        <begin status="unknown"/>
        <end position="583"/>
    </location>
</feature>
<feature type="short sequence motif" description="'HIGH' region">
    <location>
        <begin position="84"/>
        <end position="94"/>
    </location>
</feature>
<feature type="short sequence motif" description="'KIIK' region">
    <location>
        <begin position="128"/>
        <end position="131"/>
    </location>
</feature>
<feature type="short sequence motif" description="'KMSKS' region">
    <location>
        <begin position="337"/>
        <end position="341"/>
    </location>
</feature>
<feature type="binding site" evidence="2">
    <location>
        <position position="82"/>
    </location>
    <ligand>
        <name>Zn(2+)</name>
        <dbReference type="ChEBI" id="CHEBI:29105"/>
    </ligand>
</feature>
<feature type="binding site" evidence="2">
    <location>
        <position position="83"/>
    </location>
    <ligand>
        <name>L-cysteine</name>
        <dbReference type="ChEBI" id="CHEBI:35235"/>
    </ligand>
</feature>
<feature type="binding site" evidence="2">
    <location>
        <position position="123"/>
    </location>
    <ligand>
        <name>L-cysteine</name>
        <dbReference type="ChEBI" id="CHEBI:35235"/>
    </ligand>
</feature>
<feature type="binding site" evidence="2">
    <location>
        <position position="271"/>
    </location>
    <ligand>
        <name>Zn(2+)</name>
        <dbReference type="ChEBI" id="CHEBI:29105"/>
    </ligand>
</feature>
<feature type="binding site" evidence="2">
    <location>
        <position position="296"/>
    </location>
    <ligand>
        <name>L-cysteine</name>
        <dbReference type="ChEBI" id="CHEBI:35235"/>
    </ligand>
</feature>
<feature type="binding site" evidence="2">
    <location>
        <position position="296"/>
    </location>
    <ligand>
        <name>Zn(2+)</name>
        <dbReference type="ChEBI" id="CHEBI:29105"/>
    </ligand>
</feature>
<feature type="binding site" evidence="2">
    <location>
        <position position="300"/>
    </location>
    <ligand>
        <name>Zn(2+)</name>
        <dbReference type="ChEBI" id="CHEBI:29105"/>
    </ligand>
</feature>
<feature type="binding site" evidence="1">
    <location>
        <position position="340"/>
    </location>
    <ligand>
        <name>ATP</name>
        <dbReference type="ChEBI" id="CHEBI:30616"/>
    </ligand>
</feature>
<proteinExistence type="inferred from homology"/>
<protein>
    <recommendedName>
        <fullName>Probable cysteine--tRNA ligase, mitochondrial</fullName>
        <ecNumber>6.1.1.16</ecNumber>
    </recommendedName>
    <alternativeName>
        <fullName>Cysteinyl-tRNA synthetase</fullName>
        <shortName>CysRS</shortName>
    </alternativeName>
</protein>
<sequence>MLKLISRNAINKNKIILFRLYTTTINSSNNGSTIREWKKPSLENSYDTGIMVKNSLFKNGNVPFLISNCSEKNQRPISWYTCGPTVYSSSHIGHARNYMTVDIIQRILINYFRFNIIHVMGLTDIDDKIINKSKQELISASELSKKFEQEFFEDLKSLNIKPPMFTTRVSEHIDEIIKYIEKIKENQLTYESTKSVIFDVNKFGIDRYCSLRAANQQIKSDDTLLEKDKKSSQDFVLWKAYNENIDIDGTGNPVCWDSPFGKGRPGWHIECSAMIDSIFKDHLDVHSGGVDLEFPHHQNEIAQCEGHSHSHGSGDAESTQWANYFFHIGHLILNNEKMSKSLGNVITIRDFLSRYSANSLRWICLIHKYNDPLSFSDETLQLCISKEIKFLNWFKIVRSKLKLEQTSVNKVKKTFNHSIELLNQLSETKYLIEKDLKDDFNTPSVIKRLELLMKQTNESMNSIDTDLLFNVQDYVESILNIFGLEVNSEISDHNKTDESNQFLLEKLLDFRSDVKNLAKNEKSLDQIKSKIYQITDQLRSDCQSEISLRVSDIPDKGTNKPYTVDWLDKNHIQLLNIKKQSKK</sequence>
<comment type="function">
    <text evidence="3">Mitochondrial cysteine-specific aminoacyl-tRNA synthetase that catalyzes the ATP-dependent ligation of cysteine to tRNA(Cys).</text>
</comment>
<comment type="function">
    <text evidence="3">In addition to its role as an aminoacyl-tRNA synthetase, has also cysteine persulfide synthase activity. Produces reactive persulfide species such as cysteine persulfide (CysSSH) from substrate cysteine and mediate direct incorporation of CysSSH into proteins during translations, resulting in protein persulfides and polysulfides. CysSSHs behave as potent antioxidants and cellular protectants.</text>
</comment>
<comment type="catalytic activity">
    <reaction evidence="3">
        <text>tRNA(Cys) + L-cysteine + ATP = L-cysteinyl-tRNA(Cys) + AMP + diphosphate</text>
        <dbReference type="Rhea" id="RHEA:17773"/>
        <dbReference type="Rhea" id="RHEA-COMP:9661"/>
        <dbReference type="Rhea" id="RHEA-COMP:9679"/>
        <dbReference type="ChEBI" id="CHEBI:30616"/>
        <dbReference type="ChEBI" id="CHEBI:33019"/>
        <dbReference type="ChEBI" id="CHEBI:35235"/>
        <dbReference type="ChEBI" id="CHEBI:78442"/>
        <dbReference type="ChEBI" id="CHEBI:78517"/>
        <dbReference type="ChEBI" id="CHEBI:456215"/>
        <dbReference type="EC" id="6.1.1.16"/>
    </reaction>
    <physiologicalReaction direction="right-to-left" evidence="3">
        <dbReference type="Rhea" id="RHEA:17775"/>
    </physiologicalReaction>
</comment>
<comment type="cofactor">
    <cofactor evidence="2">
        <name>Zn(2+)</name>
        <dbReference type="ChEBI" id="CHEBI:29105"/>
    </cofactor>
    <text evidence="2">Binds 1 zinc ion per subunit.</text>
</comment>
<comment type="subcellular location">
    <subcellularLocation>
        <location evidence="3">Mitochondrion</location>
    </subcellularLocation>
</comment>
<comment type="domain">
    <text evidence="3">'KIIK' region and 'KMSKS' region are required for cysteine persulfide synthase activity.</text>
</comment>
<comment type="similarity">
    <text evidence="5">Belongs to the class-I aminoacyl-tRNA synthetase family.</text>
</comment>
<accession>Q54ZY3</accession>
<accession>Q86AQ2</accession>
<gene>
    <name type="primary">mcysS</name>
    <name type="ORF">DDB_G0277295</name>
</gene>
<dbReference type="EC" id="6.1.1.16"/>
<dbReference type="EMBL" id="AAFI02000019">
    <property type="protein sequence ID" value="EAL68834.1"/>
    <property type="molecule type" value="Genomic_DNA"/>
</dbReference>
<dbReference type="RefSeq" id="XP_642733.1">
    <property type="nucleotide sequence ID" value="XM_637641.1"/>
</dbReference>
<dbReference type="SMR" id="Q54ZY3"/>
<dbReference type="FunCoup" id="Q54ZY3">
    <property type="interactions" value="44"/>
</dbReference>
<dbReference type="STRING" id="44689.Q54ZY3"/>
<dbReference type="PaxDb" id="44689-DDB0231320"/>
<dbReference type="EnsemblProtists" id="EAL68834">
    <property type="protein sequence ID" value="EAL68834"/>
    <property type="gene ID" value="DDB_G0277295"/>
</dbReference>
<dbReference type="GeneID" id="8620927"/>
<dbReference type="KEGG" id="ddi:DDB_G0277295"/>
<dbReference type="dictyBase" id="DDB_G0277295">
    <property type="gene designation" value="mcysS"/>
</dbReference>
<dbReference type="VEuPathDB" id="AmoebaDB:DDB_G0277295"/>
<dbReference type="eggNOG" id="KOG2007">
    <property type="taxonomic scope" value="Eukaryota"/>
</dbReference>
<dbReference type="HOGENOM" id="CLU_013528_3_3_1"/>
<dbReference type="InParanoid" id="Q54ZY3"/>
<dbReference type="OMA" id="CSAMTHH"/>
<dbReference type="PhylomeDB" id="Q54ZY3"/>
<dbReference type="PRO" id="PR:Q54ZY3"/>
<dbReference type="Proteomes" id="UP000002195">
    <property type="component" value="Chromosome 2"/>
</dbReference>
<dbReference type="GO" id="GO:0005737">
    <property type="term" value="C:cytoplasm"/>
    <property type="evidence" value="ECO:0000318"/>
    <property type="project" value="GO_Central"/>
</dbReference>
<dbReference type="GO" id="GO:0005739">
    <property type="term" value="C:mitochondrion"/>
    <property type="evidence" value="ECO:0000250"/>
    <property type="project" value="UniProtKB"/>
</dbReference>
<dbReference type="GO" id="GO:0005524">
    <property type="term" value="F:ATP binding"/>
    <property type="evidence" value="ECO:0000318"/>
    <property type="project" value="GO_Central"/>
</dbReference>
<dbReference type="GO" id="GO:0004817">
    <property type="term" value="F:cysteine-tRNA ligase activity"/>
    <property type="evidence" value="ECO:0000250"/>
    <property type="project" value="UniProtKB"/>
</dbReference>
<dbReference type="GO" id="GO:0046872">
    <property type="term" value="F:metal ion binding"/>
    <property type="evidence" value="ECO:0007669"/>
    <property type="project" value="UniProtKB-KW"/>
</dbReference>
<dbReference type="GO" id="GO:0006423">
    <property type="term" value="P:cysteinyl-tRNA aminoacylation"/>
    <property type="evidence" value="ECO:0000250"/>
    <property type="project" value="UniProtKB"/>
</dbReference>
<dbReference type="CDD" id="cd00672">
    <property type="entry name" value="CysRS_core"/>
    <property type="match status" value="1"/>
</dbReference>
<dbReference type="FunFam" id="3.40.50.620:FF:000218">
    <property type="entry name" value="Cysteine-tRNA ligase"/>
    <property type="match status" value="1"/>
</dbReference>
<dbReference type="Gene3D" id="1.20.120.1910">
    <property type="entry name" value="Cysteine-tRNA ligase, C-terminal anti-codon recognition domain"/>
    <property type="match status" value="1"/>
</dbReference>
<dbReference type="Gene3D" id="3.40.50.620">
    <property type="entry name" value="HUPs"/>
    <property type="match status" value="1"/>
</dbReference>
<dbReference type="HAMAP" id="MF_00041">
    <property type="entry name" value="Cys_tRNA_synth"/>
    <property type="match status" value="1"/>
</dbReference>
<dbReference type="InterPro" id="IPR015803">
    <property type="entry name" value="Cys-tRNA-ligase"/>
</dbReference>
<dbReference type="InterPro" id="IPR024909">
    <property type="entry name" value="Cys-tRNA/MSH_ligase"/>
</dbReference>
<dbReference type="InterPro" id="IPR014729">
    <property type="entry name" value="Rossmann-like_a/b/a_fold"/>
</dbReference>
<dbReference type="InterPro" id="IPR032678">
    <property type="entry name" value="tRNA-synt_1_cat_dom"/>
</dbReference>
<dbReference type="InterPro" id="IPR009080">
    <property type="entry name" value="tRNAsynth_Ia_anticodon-bd"/>
</dbReference>
<dbReference type="NCBIfam" id="TIGR00435">
    <property type="entry name" value="cysS"/>
    <property type="match status" value="1"/>
</dbReference>
<dbReference type="PANTHER" id="PTHR10890:SF4">
    <property type="entry name" value="CYSTEINE--TRNA LIGASE, MITOCHONDRIAL-RELATED"/>
    <property type="match status" value="1"/>
</dbReference>
<dbReference type="PANTHER" id="PTHR10890">
    <property type="entry name" value="CYSTEINYL-TRNA SYNTHETASE"/>
    <property type="match status" value="1"/>
</dbReference>
<dbReference type="Pfam" id="PF01406">
    <property type="entry name" value="tRNA-synt_1e"/>
    <property type="match status" value="1"/>
</dbReference>
<dbReference type="PRINTS" id="PR00983">
    <property type="entry name" value="TRNASYNTHCYS"/>
</dbReference>
<dbReference type="SUPFAM" id="SSF47323">
    <property type="entry name" value="Anticodon-binding domain of a subclass of class I aminoacyl-tRNA synthetases"/>
    <property type="match status" value="1"/>
</dbReference>
<dbReference type="SUPFAM" id="SSF52374">
    <property type="entry name" value="Nucleotidylyl transferase"/>
    <property type="match status" value="1"/>
</dbReference>
<keyword id="KW-0030">Aminoacyl-tRNA synthetase</keyword>
<keyword id="KW-0067">ATP-binding</keyword>
<keyword id="KW-0436">Ligase</keyword>
<keyword id="KW-0479">Metal-binding</keyword>
<keyword id="KW-0496">Mitochondrion</keyword>
<keyword id="KW-0547">Nucleotide-binding</keyword>
<keyword id="KW-0648">Protein biosynthesis</keyword>
<keyword id="KW-1185">Reference proteome</keyword>
<keyword id="KW-0809">Transit peptide</keyword>
<keyword id="KW-0862">Zinc</keyword>
<evidence type="ECO:0000250" key="1"/>
<evidence type="ECO:0000250" key="2">
    <source>
        <dbReference type="UniProtKB" id="P21888"/>
    </source>
</evidence>
<evidence type="ECO:0000250" key="3">
    <source>
        <dbReference type="UniProtKB" id="Q9HA77"/>
    </source>
</evidence>
<evidence type="ECO:0000255" key="4"/>
<evidence type="ECO:0000305" key="5"/>
<organism>
    <name type="scientific">Dictyostelium discoideum</name>
    <name type="common">Social amoeba</name>
    <dbReference type="NCBI Taxonomy" id="44689"/>
    <lineage>
        <taxon>Eukaryota</taxon>
        <taxon>Amoebozoa</taxon>
        <taxon>Evosea</taxon>
        <taxon>Eumycetozoa</taxon>
        <taxon>Dictyostelia</taxon>
        <taxon>Dictyosteliales</taxon>
        <taxon>Dictyosteliaceae</taxon>
        <taxon>Dictyostelium</taxon>
    </lineage>
</organism>
<reference key="1">
    <citation type="journal article" date="2002" name="Nature">
        <title>Sequence and analysis of chromosome 2 of Dictyostelium discoideum.</title>
        <authorList>
            <person name="Gloeckner G."/>
            <person name="Eichinger L."/>
            <person name="Szafranski K."/>
            <person name="Pachebat J.A."/>
            <person name="Bankier A.T."/>
            <person name="Dear P.H."/>
            <person name="Lehmann R."/>
            <person name="Baumgart C."/>
            <person name="Parra G."/>
            <person name="Abril J.F."/>
            <person name="Guigo R."/>
            <person name="Kumpf K."/>
            <person name="Tunggal B."/>
            <person name="Cox E.C."/>
            <person name="Quail M.A."/>
            <person name="Platzer M."/>
            <person name="Rosenthal A."/>
            <person name="Noegel A.A."/>
        </authorList>
    </citation>
    <scope>NUCLEOTIDE SEQUENCE [LARGE SCALE GENOMIC DNA]</scope>
    <source>
        <strain>AX4</strain>
    </source>
</reference>
<reference key="2">
    <citation type="journal article" date="2005" name="Nature">
        <title>The genome of the social amoeba Dictyostelium discoideum.</title>
        <authorList>
            <person name="Eichinger L."/>
            <person name="Pachebat J.A."/>
            <person name="Gloeckner G."/>
            <person name="Rajandream M.A."/>
            <person name="Sucgang R."/>
            <person name="Berriman M."/>
            <person name="Song J."/>
            <person name="Olsen R."/>
            <person name="Szafranski K."/>
            <person name="Xu Q."/>
            <person name="Tunggal B."/>
            <person name="Kummerfeld S."/>
            <person name="Madera M."/>
            <person name="Konfortov B.A."/>
            <person name="Rivero F."/>
            <person name="Bankier A.T."/>
            <person name="Lehmann R."/>
            <person name="Hamlin N."/>
            <person name="Davies R."/>
            <person name="Gaudet P."/>
            <person name="Fey P."/>
            <person name="Pilcher K."/>
            <person name="Chen G."/>
            <person name="Saunders D."/>
            <person name="Sodergren E.J."/>
            <person name="Davis P."/>
            <person name="Kerhornou A."/>
            <person name="Nie X."/>
            <person name="Hall N."/>
            <person name="Anjard C."/>
            <person name="Hemphill L."/>
            <person name="Bason N."/>
            <person name="Farbrother P."/>
            <person name="Desany B."/>
            <person name="Just E."/>
            <person name="Morio T."/>
            <person name="Rost R."/>
            <person name="Churcher C.M."/>
            <person name="Cooper J."/>
            <person name="Haydock S."/>
            <person name="van Driessche N."/>
            <person name="Cronin A."/>
            <person name="Goodhead I."/>
            <person name="Muzny D.M."/>
            <person name="Mourier T."/>
            <person name="Pain A."/>
            <person name="Lu M."/>
            <person name="Harper D."/>
            <person name="Lindsay R."/>
            <person name="Hauser H."/>
            <person name="James K.D."/>
            <person name="Quiles M."/>
            <person name="Madan Babu M."/>
            <person name="Saito T."/>
            <person name="Buchrieser C."/>
            <person name="Wardroper A."/>
            <person name="Felder M."/>
            <person name="Thangavelu M."/>
            <person name="Johnson D."/>
            <person name="Knights A."/>
            <person name="Loulseged H."/>
            <person name="Mungall K.L."/>
            <person name="Oliver K."/>
            <person name="Price C."/>
            <person name="Quail M.A."/>
            <person name="Urushihara H."/>
            <person name="Hernandez J."/>
            <person name="Rabbinowitsch E."/>
            <person name="Steffen D."/>
            <person name="Sanders M."/>
            <person name="Ma J."/>
            <person name="Kohara Y."/>
            <person name="Sharp S."/>
            <person name="Simmonds M.N."/>
            <person name="Spiegler S."/>
            <person name="Tivey A."/>
            <person name="Sugano S."/>
            <person name="White B."/>
            <person name="Walker D."/>
            <person name="Woodward J.R."/>
            <person name="Winckler T."/>
            <person name="Tanaka Y."/>
            <person name="Shaulsky G."/>
            <person name="Schleicher M."/>
            <person name="Weinstock G.M."/>
            <person name="Rosenthal A."/>
            <person name="Cox E.C."/>
            <person name="Chisholm R.L."/>
            <person name="Gibbs R.A."/>
            <person name="Loomis W.F."/>
            <person name="Platzer M."/>
            <person name="Kay R.R."/>
            <person name="Williams J.G."/>
            <person name="Dear P.H."/>
            <person name="Noegel A.A."/>
            <person name="Barrell B.G."/>
            <person name="Kuspa A."/>
        </authorList>
    </citation>
    <scope>NUCLEOTIDE SEQUENCE [LARGE SCALE GENOMIC DNA]</scope>
    <source>
        <strain>AX4</strain>
    </source>
</reference>
<name>SYCM_DICDI</name>